<keyword id="KW-0010">Activator</keyword>
<keyword id="KW-0217">Developmental protein</keyword>
<keyword id="KW-0238">DNA-binding</keyword>
<keyword id="KW-0539">Nucleus</keyword>
<keyword id="KW-1185">Reference proteome</keyword>
<keyword id="KW-0346">Stress response</keyword>
<keyword id="KW-0804">Transcription</keyword>
<keyword id="KW-0805">Transcription regulation</keyword>
<sequence>MTDYRLWSNTNTTNTCDDTMMMDSFLSSDPSSFWPASTPNRPTPVNGVGETMPFFNQESLQQRLQALIDGARESWAYAIFWQSSVVDFASQTVLGWGDGYYKGEEDKNKRRGSSSSAANFVAEQEHRKKVLRELNSLISGVQASAGNGTDDAVDEEVTDTEWFFLISMTQSFVNGNGLPGLAMYSSSPIWVTGTEKLAASQCERARQAQGFGLQTIVCIPSANGVVELGSTELIFQSSDLMNKVKYLFNFNIDMGSVTGSGSGSGSCAVHPEPDPSALWLTDPSSSVVEPKDSLIHSSSRDVQLVYGNENSENQQQHCQGFFTKELNFSGYGFDGSSNRNKTGISCKPESREILNFGDSSKRFSGQSQLGPGPGLMEENKNKNKNKKRSLGSRGNNEEGMLSFVSGVILPTSTMGKSGDSDHSDLEASVVKEAVVEPEKKPRKRGRKPANGREEPLNHVEAERQRREKLNQRFYALRAVVPNVSKMDKASLLGDAIAYINELKSKVQNSDLDKEELRSQIECLRKELTNKGSSNYSASPPLNQDVKIVDMDIDVKVIGWDAMIRIQCSKKNHPAARLMAALKDLDLDVHHASVSVVNDLMIQQATVKMGSRLYAQEQLRIALTSKIAESR</sequence>
<gene>
    <name evidence="7" type="primary">MYC1</name>
    <name evidence="6" type="synonym">JAMYC10</name>
    <name evidence="8" type="ordered locus">Solyc08g005050</name>
</gene>
<organism>
    <name type="scientific">Solanum lycopersicum</name>
    <name type="common">Tomato</name>
    <name type="synonym">Lycopersicon esculentum</name>
    <dbReference type="NCBI Taxonomy" id="4081"/>
    <lineage>
        <taxon>Eukaryota</taxon>
        <taxon>Viridiplantae</taxon>
        <taxon>Streptophyta</taxon>
        <taxon>Embryophyta</taxon>
        <taxon>Tracheophyta</taxon>
        <taxon>Spermatophyta</taxon>
        <taxon>Magnoliopsida</taxon>
        <taxon>eudicotyledons</taxon>
        <taxon>Gunneridae</taxon>
        <taxon>Pentapetalae</taxon>
        <taxon>asterids</taxon>
        <taxon>lamiids</taxon>
        <taxon>Solanales</taxon>
        <taxon>Solanaceae</taxon>
        <taxon>Solanoideae</taxon>
        <taxon>Solaneae</taxon>
        <taxon>Solanum</taxon>
        <taxon>Solanum subgen. Lycopersicon</taxon>
    </lineage>
</organism>
<comment type="function">
    <text evidence="3 4 5">Transcriptional activator that binds to the G-box motif (5'-AACGTG-3') found in a number of promoters of jasmonate-induced genes (PubMed:15231736). Transcription activator involved in the transcriptional regulation of terpene biosynthesis in glandular trichomes (PubMed:24884371, PubMed:30518626). Binds to the promoter of the linalool synthase TPS5 and promotes TPS5 gene transactivation (PubMed:24884371). Acts synergistically with EOT1 in the transactivation of TPS5 (PubMed:24884371). Involved in type VI glandular trichome development (PubMed:30518626). Involved in the activation of terpene synthases required for volatile mono- and sesquiterpenes synthesis by the glandular cells of type VI trichomes (PubMed:30518626).</text>
</comment>
<comment type="subcellular location">
    <subcellularLocation>
        <location evidence="1">Nucleus</location>
    </subcellularLocation>
</comment>
<comment type="tissue specificity">
    <text evidence="3 4">Highly expressed in trichomes and at lower levels in leaves and flowers (PubMed:24884371). Expressed at low levels in roots, stems, leaves, flowers and fruits (PubMed:15231736).</text>
</comment>
<comment type="induction">
    <text evidence="3">Induced by methyl jasmonate and wounding.</text>
</comment>
<comment type="disruption phenotype">
    <text evidence="5">Altered morphology of type VI glandular trichomes (PubMed:30518626). Strong reduction of volatile terpene synthesis in trichomes (PubMed:30518626). Strong reduction of the expression of terpene synthase genes in trichomes (PubMed:30518626).</text>
</comment>
<comment type="caution">
    <text evidence="1">Contains a degenerate basic motif not likely to bind DNA.</text>
</comment>
<dbReference type="EMBL" id="KF430611">
    <property type="protein sequence ID" value="AIC63945.1"/>
    <property type="molecule type" value="mRNA"/>
</dbReference>
<dbReference type="EMBL" id="CM001071">
    <property type="status" value="NOT_ANNOTATED_CDS"/>
    <property type="molecule type" value="Genomic_DNA"/>
</dbReference>
<dbReference type="RefSeq" id="NP_001288107.1">
    <property type="nucleotide sequence ID" value="NM_001301178.2"/>
</dbReference>
<dbReference type="SMR" id="A0A060KY90"/>
<dbReference type="FunCoup" id="A0A060KY90">
    <property type="interactions" value="392"/>
</dbReference>
<dbReference type="STRING" id="4081.A0A060KY90"/>
<dbReference type="GeneID" id="101261048"/>
<dbReference type="KEGG" id="sly:101261048"/>
<dbReference type="InParanoid" id="A0A060KY90"/>
<dbReference type="OrthoDB" id="1926382at2759"/>
<dbReference type="Proteomes" id="UP000004994">
    <property type="component" value="Unplaced"/>
</dbReference>
<dbReference type="ExpressionAtlas" id="A0A060KY90">
    <property type="expression patterns" value="baseline and differential"/>
</dbReference>
<dbReference type="GO" id="GO:0005634">
    <property type="term" value="C:nucleus"/>
    <property type="evidence" value="ECO:0000318"/>
    <property type="project" value="GO_Central"/>
</dbReference>
<dbReference type="GO" id="GO:0003700">
    <property type="term" value="F:DNA-binding transcription factor activity"/>
    <property type="evidence" value="ECO:0000318"/>
    <property type="project" value="GO_Central"/>
</dbReference>
<dbReference type="GO" id="GO:0046983">
    <property type="term" value="F:protein dimerization activity"/>
    <property type="evidence" value="ECO:0007669"/>
    <property type="project" value="InterPro"/>
</dbReference>
<dbReference type="GO" id="GO:0043565">
    <property type="term" value="F:sequence-specific DNA binding"/>
    <property type="evidence" value="ECO:0000314"/>
    <property type="project" value="UniProtKB"/>
</dbReference>
<dbReference type="GO" id="GO:0000976">
    <property type="term" value="F:transcription cis-regulatory region binding"/>
    <property type="evidence" value="ECO:0000318"/>
    <property type="project" value="GO_Central"/>
</dbReference>
<dbReference type="GO" id="GO:0045893">
    <property type="term" value="P:positive regulation of DNA-templated transcription"/>
    <property type="evidence" value="ECO:0000314"/>
    <property type="project" value="UniProtKB"/>
</dbReference>
<dbReference type="GO" id="GO:0006355">
    <property type="term" value="P:regulation of DNA-templated transcription"/>
    <property type="evidence" value="ECO:0000318"/>
    <property type="project" value="GO_Central"/>
</dbReference>
<dbReference type="GO" id="GO:0010090">
    <property type="term" value="P:trichome morphogenesis"/>
    <property type="evidence" value="ECO:0000315"/>
    <property type="project" value="UniProtKB"/>
</dbReference>
<dbReference type="CDD" id="cd11449">
    <property type="entry name" value="bHLH_AtAIB_like"/>
    <property type="match status" value="1"/>
</dbReference>
<dbReference type="FunFam" id="4.10.280.10:FF:000078">
    <property type="entry name" value="Transcription factor bHLH13"/>
    <property type="match status" value="1"/>
</dbReference>
<dbReference type="Gene3D" id="4.10.280.10">
    <property type="entry name" value="Helix-loop-helix DNA-binding domain"/>
    <property type="match status" value="1"/>
</dbReference>
<dbReference type="InterPro" id="IPR045084">
    <property type="entry name" value="AIB/MYC-like"/>
</dbReference>
<dbReference type="InterPro" id="IPR054502">
    <property type="entry name" value="bHLH-TF_ACT-like_plant"/>
</dbReference>
<dbReference type="InterPro" id="IPR011598">
    <property type="entry name" value="bHLH_dom"/>
</dbReference>
<dbReference type="InterPro" id="IPR036638">
    <property type="entry name" value="HLH_DNA-bd_sf"/>
</dbReference>
<dbReference type="InterPro" id="IPR025610">
    <property type="entry name" value="MYC/MYB_N"/>
</dbReference>
<dbReference type="PANTHER" id="PTHR11514">
    <property type="entry name" value="MYC"/>
    <property type="match status" value="1"/>
</dbReference>
<dbReference type="PANTHER" id="PTHR11514:SF138">
    <property type="entry name" value="TRANSCRIPTION FACTOR MYC1"/>
    <property type="match status" value="1"/>
</dbReference>
<dbReference type="Pfam" id="PF14215">
    <property type="entry name" value="bHLH-MYC_N"/>
    <property type="match status" value="1"/>
</dbReference>
<dbReference type="Pfam" id="PF22754">
    <property type="entry name" value="bHLH-TF_ACT-like_plant"/>
    <property type="match status" value="1"/>
</dbReference>
<dbReference type="Pfam" id="PF00010">
    <property type="entry name" value="HLH"/>
    <property type="match status" value="1"/>
</dbReference>
<dbReference type="SMART" id="SM00353">
    <property type="entry name" value="HLH"/>
    <property type="match status" value="1"/>
</dbReference>
<dbReference type="SUPFAM" id="SSF47459">
    <property type="entry name" value="HLH, helix-loop-helix DNA-binding domain"/>
    <property type="match status" value="1"/>
</dbReference>
<dbReference type="PROSITE" id="PS50888">
    <property type="entry name" value="BHLH"/>
    <property type="match status" value="1"/>
</dbReference>
<feature type="chain" id="PRO_0000447546" description="Transcription factor MYC1">
    <location>
        <begin position="1"/>
        <end position="630"/>
    </location>
</feature>
<feature type="domain" description="bHLH" evidence="1">
    <location>
        <begin position="453"/>
        <end position="502"/>
    </location>
</feature>
<feature type="region of interest" description="Disordered" evidence="2">
    <location>
        <begin position="356"/>
        <end position="398"/>
    </location>
</feature>
<feature type="region of interest" description="Disordered" evidence="2">
    <location>
        <begin position="430"/>
        <end position="463"/>
    </location>
</feature>
<feature type="region of interest" description="Basic motif; degenerate" evidence="1">
    <location>
        <begin position="453"/>
        <end position="466"/>
    </location>
</feature>
<feature type="region of interest" description="Helix-loop-helix motif" evidence="1">
    <location>
        <begin position="467"/>
        <end position="502"/>
    </location>
</feature>
<feature type="compositionally biased region" description="Basic residues" evidence="2">
    <location>
        <begin position="440"/>
        <end position="449"/>
    </location>
</feature>
<feature type="compositionally biased region" description="Basic and acidic residues" evidence="2">
    <location>
        <begin position="450"/>
        <end position="463"/>
    </location>
</feature>
<feature type="mutagenesis site" description="Enhanced transcriptional activity." evidence="5">
    <original>E</original>
    <variation>K</variation>
    <location>
        <position position="161"/>
    </location>
</feature>
<accession>A0A060KY90</accession>
<accession>A0A3Q7HIZ7</accession>
<protein>
    <recommendedName>
        <fullName evidence="7">Transcription factor MYC1</fullName>
        <shortName evidence="7">SlMYC1</shortName>
    </recommendedName>
</protein>
<proteinExistence type="evidence at protein level"/>
<reference key="1">
    <citation type="journal article" date="2014" name="BMC Genomics">
        <title>RNA sequencing on Solanum lycopersicum trichomes identifies transcription factors that activate terpene synthase promoters.</title>
        <authorList>
            <person name="Spyropoulou E.A."/>
            <person name="Haring M.A."/>
            <person name="Schuurink R.C."/>
        </authorList>
    </citation>
    <scope>NUCLEOTIDE SEQUENCE [MRNA]</scope>
    <scope>FUNCTION</scope>
    <scope>TISSUE SPECIFICITY</scope>
    <source>
        <strain>cv. Moneymaker</strain>
    </source>
</reference>
<reference key="2">
    <citation type="journal article" date="2012" name="Nature">
        <title>The tomato genome sequence provides insights into fleshy fruit evolution.</title>
        <authorList>
            <consortium name="Tomato Genome Consortium"/>
        </authorList>
    </citation>
    <scope>NUCLEOTIDE SEQUENCE [LARGE SCALE GENOMIC DNA]</scope>
    <source>
        <strain>cv. Heinz 1706</strain>
    </source>
</reference>
<reference key="3">
    <citation type="journal article" date="2004" name="Genes Dev.">
        <title>Conserved MYC transcription factors play a key role in jasmonate signaling both in tomato and Arabidopsis.</title>
        <authorList>
            <person name="Boter M."/>
            <person name="Ruiz-Rivero O."/>
            <person name="Abdeen A."/>
            <person name="Prat S."/>
        </authorList>
    </citation>
    <scope>FUNCTION</scope>
    <scope>TISSUE SPECIFICITY</scope>
    <scope>INDUCTION</scope>
</reference>
<reference key="4">
    <citation type="journal article" date="2018" name="Plant Cell">
        <title>SlMYC1 regulates type VI glandular trichome formation and terpene biosynthesis in tomato glandular cells.</title>
        <authorList>
            <person name="Xu J."/>
            <person name="van Herwijnen Z.O."/>
            <person name="Draeger D.B."/>
            <person name="Sui C."/>
            <person name="Haring M.A."/>
            <person name="Schuurink R.C."/>
        </authorList>
    </citation>
    <scope>FUNCTION</scope>
    <scope>DISRUPTION PHENOTYPE</scope>
    <scope>MUTAGENESIS OF GLU-161</scope>
</reference>
<evidence type="ECO:0000255" key="1">
    <source>
        <dbReference type="PROSITE-ProRule" id="PRU00981"/>
    </source>
</evidence>
<evidence type="ECO:0000256" key="2">
    <source>
        <dbReference type="SAM" id="MobiDB-lite"/>
    </source>
</evidence>
<evidence type="ECO:0000269" key="3">
    <source>
    </source>
</evidence>
<evidence type="ECO:0000269" key="4">
    <source>
    </source>
</evidence>
<evidence type="ECO:0000269" key="5">
    <source>
    </source>
</evidence>
<evidence type="ECO:0000303" key="6">
    <source>
    </source>
</evidence>
<evidence type="ECO:0000303" key="7">
    <source>
    </source>
</evidence>
<evidence type="ECO:0000305" key="8"/>
<name>MYC1_SOLLC</name>